<organism>
    <name type="scientific">Clostridium perfringens (strain ATCC 13124 / DSM 756 / JCM 1290 / NCIMB 6125 / NCTC 8237 / Type A)</name>
    <dbReference type="NCBI Taxonomy" id="195103"/>
    <lineage>
        <taxon>Bacteria</taxon>
        <taxon>Bacillati</taxon>
        <taxon>Bacillota</taxon>
        <taxon>Clostridia</taxon>
        <taxon>Eubacteriales</taxon>
        <taxon>Clostridiaceae</taxon>
        <taxon>Clostridium</taxon>
    </lineage>
</organism>
<dbReference type="EMBL" id="CP000246">
    <property type="protein sequence ID" value="ABG84828.1"/>
    <property type="molecule type" value="Genomic_DNA"/>
</dbReference>
<dbReference type="RefSeq" id="WP_003451020.1">
    <property type="nucleotide sequence ID" value="NC_008261.1"/>
</dbReference>
<dbReference type="SMR" id="Q0TM10"/>
<dbReference type="STRING" id="195103.CPF_2976"/>
<dbReference type="PaxDb" id="195103-CPF_2976"/>
<dbReference type="GeneID" id="93000745"/>
<dbReference type="KEGG" id="cpf:CPF_2976"/>
<dbReference type="eggNOG" id="COG0238">
    <property type="taxonomic scope" value="Bacteria"/>
</dbReference>
<dbReference type="HOGENOM" id="CLU_148710_0_3_9"/>
<dbReference type="Proteomes" id="UP000001823">
    <property type="component" value="Chromosome"/>
</dbReference>
<dbReference type="GO" id="GO:0022627">
    <property type="term" value="C:cytosolic small ribosomal subunit"/>
    <property type="evidence" value="ECO:0007669"/>
    <property type="project" value="TreeGrafter"/>
</dbReference>
<dbReference type="GO" id="GO:0070181">
    <property type="term" value="F:small ribosomal subunit rRNA binding"/>
    <property type="evidence" value="ECO:0007669"/>
    <property type="project" value="TreeGrafter"/>
</dbReference>
<dbReference type="GO" id="GO:0003735">
    <property type="term" value="F:structural constituent of ribosome"/>
    <property type="evidence" value="ECO:0007669"/>
    <property type="project" value="InterPro"/>
</dbReference>
<dbReference type="GO" id="GO:0006412">
    <property type="term" value="P:translation"/>
    <property type="evidence" value="ECO:0007669"/>
    <property type="project" value="UniProtKB-UniRule"/>
</dbReference>
<dbReference type="FunFam" id="4.10.640.10:FF:000004">
    <property type="entry name" value="30S ribosomal protein S18"/>
    <property type="match status" value="1"/>
</dbReference>
<dbReference type="Gene3D" id="4.10.640.10">
    <property type="entry name" value="Ribosomal protein S18"/>
    <property type="match status" value="1"/>
</dbReference>
<dbReference type="HAMAP" id="MF_00270">
    <property type="entry name" value="Ribosomal_bS18"/>
    <property type="match status" value="1"/>
</dbReference>
<dbReference type="InterPro" id="IPR001648">
    <property type="entry name" value="Ribosomal_bS18"/>
</dbReference>
<dbReference type="InterPro" id="IPR018275">
    <property type="entry name" value="Ribosomal_bS18_CS"/>
</dbReference>
<dbReference type="InterPro" id="IPR036870">
    <property type="entry name" value="Ribosomal_bS18_sf"/>
</dbReference>
<dbReference type="NCBIfam" id="TIGR00165">
    <property type="entry name" value="S18"/>
    <property type="match status" value="1"/>
</dbReference>
<dbReference type="PANTHER" id="PTHR13479">
    <property type="entry name" value="30S RIBOSOMAL PROTEIN S18"/>
    <property type="match status" value="1"/>
</dbReference>
<dbReference type="PANTHER" id="PTHR13479:SF40">
    <property type="entry name" value="SMALL RIBOSOMAL SUBUNIT PROTEIN BS18M"/>
    <property type="match status" value="1"/>
</dbReference>
<dbReference type="Pfam" id="PF01084">
    <property type="entry name" value="Ribosomal_S18"/>
    <property type="match status" value="1"/>
</dbReference>
<dbReference type="PRINTS" id="PR00974">
    <property type="entry name" value="RIBOSOMALS18"/>
</dbReference>
<dbReference type="SUPFAM" id="SSF46911">
    <property type="entry name" value="Ribosomal protein S18"/>
    <property type="match status" value="1"/>
</dbReference>
<dbReference type="PROSITE" id="PS00057">
    <property type="entry name" value="RIBOSOMAL_S18"/>
    <property type="match status" value="1"/>
</dbReference>
<gene>
    <name evidence="1" type="primary">rpsR</name>
    <name type="ordered locus">CPF_2976</name>
</gene>
<evidence type="ECO:0000255" key="1">
    <source>
        <dbReference type="HAMAP-Rule" id="MF_00270"/>
    </source>
</evidence>
<evidence type="ECO:0000305" key="2"/>
<accession>Q0TM10</accession>
<proteinExistence type="inferred from homology"/>
<reference key="1">
    <citation type="journal article" date="2006" name="Genome Res.">
        <title>Skewed genomic variability in strains of the toxigenic bacterial pathogen, Clostridium perfringens.</title>
        <authorList>
            <person name="Myers G.S.A."/>
            <person name="Rasko D.A."/>
            <person name="Cheung J.K."/>
            <person name="Ravel J."/>
            <person name="Seshadri R."/>
            <person name="DeBoy R.T."/>
            <person name="Ren Q."/>
            <person name="Varga J."/>
            <person name="Awad M.M."/>
            <person name="Brinkac L.M."/>
            <person name="Daugherty S.C."/>
            <person name="Haft D.H."/>
            <person name="Dodson R.J."/>
            <person name="Madupu R."/>
            <person name="Nelson W.C."/>
            <person name="Rosovitz M.J."/>
            <person name="Sullivan S.A."/>
            <person name="Khouri H."/>
            <person name="Dimitrov G.I."/>
            <person name="Watkins K.L."/>
            <person name="Mulligan S."/>
            <person name="Benton J."/>
            <person name="Radune D."/>
            <person name="Fisher D.J."/>
            <person name="Atkins H.S."/>
            <person name="Hiscox T."/>
            <person name="Jost B.H."/>
            <person name="Billington S.J."/>
            <person name="Songer J.G."/>
            <person name="McClane B.A."/>
            <person name="Titball R.W."/>
            <person name="Rood J.I."/>
            <person name="Melville S.B."/>
            <person name="Paulsen I.T."/>
        </authorList>
    </citation>
    <scope>NUCLEOTIDE SEQUENCE [LARGE SCALE GENOMIC DNA]</scope>
    <source>
        <strain>ATCC 13124 / DSM 756 / JCM 1290 / NCIMB 6125 / NCTC 8237 / S 107 / Type A</strain>
    </source>
</reference>
<comment type="function">
    <text evidence="1">Binds as a heterodimer with protein bS6 to the central domain of the 16S rRNA, where it helps stabilize the platform of the 30S subunit.</text>
</comment>
<comment type="subunit">
    <text evidence="1">Part of the 30S ribosomal subunit. Forms a tight heterodimer with protein bS6.</text>
</comment>
<comment type="similarity">
    <text evidence="1">Belongs to the bacterial ribosomal protein bS18 family.</text>
</comment>
<sequence>MSNVKRGGKFRRARKKVCIFCVDKAESIDYKDVAKLKKYITERGKILPRRISGTCAKHQRQLTDAIKRSRNIALLPFTTE</sequence>
<protein>
    <recommendedName>
        <fullName evidence="1">Small ribosomal subunit protein bS18</fullName>
    </recommendedName>
    <alternativeName>
        <fullName evidence="2">30S ribosomal protein S18</fullName>
    </alternativeName>
</protein>
<keyword id="KW-0687">Ribonucleoprotein</keyword>
<keyword id="KW-0689">Ribosomal protein</keyword>
<keyword id="KW-0694">RNA-binding</keyword>
<keyword id="KW-0699">rRNA-binding</keyword>
<name>RS18_CLOP1</name>
<feature type="chain" id="PRO_1000003487" description="Small ribosomal subunit protein bS18">
    <location>
        <begin position="1"/>
        <end position="80"/>
    </location>
</feature>